<protein>
    <recommendedName>
        <fullName evidence="1">Beta-ketoacyl-[acyl-carrier-protein] synthase III</fullName>
        <shortName evidence="1">Beta-ketoacyl-ACP synthase III</shortName>
        <shortName evidence="1">KAS III</shortName>
        <ecNumber evidence="1">2.3.1.180</ecNumber>
    </recommendedName>
    <alternativeName>
        <fullName evidence="1">3-oxoacyl-[acyl-carrier-protein] synthase 3</fullName>
    </alternativeName>
    <alternativeName>
        <fullName evidence="1">3-oxoacyl-[acyl-carrier-protein] synthase III</fullName>
    </alternativeName>
</protein>
<gene>
    <name evidence="1" type="primary">fabH</name>
    <name type="ordered locus">MGAS10750_Spy1554</name>
</gene>
<sequence length="324" mass="34875">MIFSKISQVAHYVPQQLVTNNDLANIMDTSHEWIFSRTGIAERHISRDEMTSDLAIQVADQLLTQSGLKADAIDFIIVATISPDATMPSTAAKVQAAIAATSAFAFDMTAACSGFVFALAMADKLIASGAYQNGMVIGAETLSKLVNWQDRATAVLFGDGAGGVLLEASKDKHVLAETLHTDGARCQSLISGETSLSSPYSIGKKAIATIQMDGRAIFDFAIRDVSKSILTLMAQSDITKDDIDYCLLHQANRRILDKIARKIDVPREKFLENMMRYGNTSAASIPILLSEAVQKGQIRLDGTQKILLSGFGGGLTWGSLIVKI</sequence>
<comment type="function">
    <text evidence="1">Catalyzes the condensation reaction of fatty acid synthesis by the addition to an acyl acceptor of two carbons from malonyl-ACP. Catalyzes the first condensation reaction which initiates fatty acid synthesis and may therefore play a role in governing the total rate of fatty acid production. Possesses both acetoacetyl-ACP synthase and acetyl transacylase activities. Its substrate specificity determines the biosynthesis of branched-chain and/or straight-chain of fatty acids.</text>
</comment>
<comment type="catalytic activity">
    <reaction evidence="1">
        <text>malonyl-[ACP] + acetyl-CoA + H(+) = 3-oxobutanoyl-[ACP] + CO2 + CoA</text>
        <dbReference type="Rhea" id="RHEA:12080"/>
        <dbReference type="Rhea" id="RHEA-COMP:9623"/>
        <dbReference type="Rhea" id="RHEA-COMP:9625"/>
        <dbReference type="ChEBI" id="CHEBI:15378"/>
        <dbReference type="ChEBI" id="CHEBI:16526"/>
        <dbReference type="ChEBI" id="CHEBI:57287"/>
        <dbReference type="ChEBI" id="CHEBI:57288"/>
        <dbReference type="ChEBI" id="CHEBI:78449"/>
        <dbReference type="ChEBI" id="CHEBI:78450"/>
        <dbReference type="EC" id="2.3.1.180"/>
    </reaction>
</comment>
<comment type="pathway">
    <text evidence="1">Lipid metabolism; fatty acid biosynthesis.</text>
</comment>
<comment type="subunit">
    <text evidence="1">Homodimer.</text>
</comment>
<comment type="subcellular location">
    <subcellularLocation>
        <location evidence="1">Cytoplasm</location>
    </subcellularLocation>
</comment>
<comment type="domain">
    <text evidence="1">The last Arg residue of the ACP-binding site is essential for the weak association between ACP/AcpP and FabH.</text>
</comment>
<comment type="similarity">
    <text evidence="1">Belongs to the thiolase-like superfamily. FabH family.</text>
</comment>
<organism>
    <name type="scientific">Streptococcus pyogenes serotype M4 (strain MGAS10750)</name>
    <dbReference type="NCBI Taxonomy" id="370554"/>
    <lineage>
        <taxon>Bacteria</taxon>
        <taxon>Bacillati</taxon>
        <taxon>Bacillota</taxon>
        <taxon>Bacilli</taxon>
        <taxon>Lactobacillales</taxon>
        <taxon>Streptococcaceae</taxon>
        <taxon>Streptococcus</taxon>
    </lineage>
</organism>
<keyword id="KW-0012">Acyltransferase</keyword>
<keyword id="KW-0963">Cytoplasm</keyword>
<keyword id="KW-0275">Fatty acid biosynthesis</keyword>
<keyword id="KW-0276">Fatty acid metabolism</keyword>
<keyword id="KW-0444">Lipid biosynthesis</keyword>
<keyword id="KW-0443">Lipid metabolism</keyword>
<keyword id="KW-0511">Multifunctional enzyme</keyword>
<keyword id="KW-0808">Transferase</keyword>
<evidence type="ECO:0000255" key="1">
    <source>
        <dbReference type="HAMAP-Rule" id="MF_01815"/>
    </source>
</evidence>
<reference key="1">
    <citation type="journal article" date="2006" name="Proc. Natl. Acad. Sci. U.S.A.">
        <title>Molecular genetic anatomy of inter- and intraserotype variation in the human bacterial pathogen group A Streptococcus.</title>
        <authorList>
            <person name="Beres S.B."/>
            <person name="Richter E.W."/>
            <person name="Nagiec M.J."/>
            <person name="Sumby P."/>
            <person name="Porcella S.F."/>
            <person name="DeLeo F.R."/>
            <person name="Musser J.M."/>
        </authorList>
    </citation>
    <scope>NUCLEOTIDE SEQUENCE [LARGE SCALE GENOMIC DNA]</scope>
    <source>
        <strain>MGAS10750</strain>
    </source>
</reference>
<accession>Q1J582</accession>
<feature type="chain" id="PRO_1000056423" description="Beta-ketoacyl-[acyl-carrier-protein] synthase III">
    <location>
        <begin position="1"/>
        <end position="324"/>
    </location>
</feature>
<feature type="region of interest" description="ACP-binding" evidence="1">
    <location>
        <begin position="250"/>
        <end position="254"/>
    </location>
</feature>
<feature type="active site" evidence="1">
    <location>
        <position position="112"/>
    </location>
</feature>
<feature type="active site" evidence="1">
    <location>
        <position position="249"/>
    </location>
</feature>
<feature type="active site" evidence="1">
    <location>
        <position position="279"/>
    </location>
</feature>
<name>FABH_STRPF</name>
<dbReference type="EC" id="2.3.1.180" evidence="1"/>
<dbReference type="EMBL" id="CP000262">
    <property type="protein sequence ID" value="ABF38504.1"/>
    <property type="molecule type" value="Genomic_DNA"/>
</dbReference>
<dbReference type="SMR" id="Q1J582"/>
<dbReference type="KEGG" id="spi:MGAS10750_Spy1554"/>
<dbReference type="HOGENOM" id="CLU_039592_4_1_9"/>
<dbReference type="UniPathway" id="UPA00094"/>
<dbReference type="Proteomes" id="UP000002434">
    <property type="component" value="Chromosome"/>
</dbReference>
<dbReference type="GO" id="GO:0005737">
    <property type="term" value="C:cytoplasm"/>
    <property type="evidence" value="ECO:0007669"/>
    <property type="project" value="UniProtKB-SubCell"/>
</dbReference>
<dbReference type="GO" id="GO:0004315">
    <property type="term" value="F:3-oxoacyl-[acyl-carrier-protein] synthase activity"/>
    <property type="evidence" value="ECO:0007669"/>
    <property type="project" value="InterPro"/>
</dbReference>
<dbReference type="GO" id="GO:0033818">
    <property type="term" value="F:beta-ketoacyl-acyl-carrier-protein synthase III activity"/>
    <property type="evidence" value="ECO:0007669"/>
    <property type="project" value="UniProtKB-UniRule"/>
</dbReference>
<dbReference type="GO" id="GO:0006633">
    <property type="term" value="P:fatty acid biosynthetic process"/>
    <property type="evidence" value="ECO:0007669"/>
    <property type="project" value="UniProtKB-UniRule"/>
</dbReference>
<dbReference type="CDD" id="cd00830">
    <property type="entry name" value="KAS_III"/>
    <property type="match status" value="1"/>
</dbReference>
<dbReference type="Gene3D" id="3.40.47.10">
    <property type="match status" value="1"/>
</dbReference>
<dbReference type="HAMAP" id="MF_01815">
    <property type="entry name" value="FabH"/>
    <property type="match status" value="1"/>
</dbReference>
<dbReference type="InterPro" id="IPR013747">
    <property type="entry name" value="ACP_syn_III_C"/>
</dbReference>
<dbReference type="InterPro" id="IPR013751">
    <property type="entry name" value="ACP_syn_III_N"/>
</dbReference>
<dbReference type="InterPro" id="IPR004655">
    <property type="entry name" value="FabH"/>
</dbReference>
<dbReference type="InterPro" id="IPR016039">
    <property type="entry name" value="Thiolase-like"/>
</dbReference>
<dbReference type="NCBIfam" id="TIGR00747">
    <property type="entry name" value="fabH"/>
    <property type="match status" value="1"/>
</dbReference>
<dbReference type="NCBIfam" id="NF006829">
    <property type="entry name" value="PRK09352.1"/>
    <property type="match status" value="1"/>
</dbReference>
<dbReference type="PANTHER" id="PTHR43091">
    <property type="entry name" value="3-OXOACYL-[ACYL-CARRIER-PROTEIN] SYNTHASE"/>
    <property type="match status" value="1"/>
</dbReference>
<dbReference type="PANTHER" id="PTHR43091:SF1">
    <property type="entry name" value="BETA-KETOACYL-[ACYL-CARRIER-PROTEIN] SYNTHASE III, CHLOROPLASTIC"/>
    <property type="match status" value="1"/>
</dbReference>
<dbReference type="Pfam" id="PF08545">
    <property type="entry name" value="ACP_syn_III"/>
    <property type="match status" value="1"/>
</dbReference>
<dbReference type="Pfam" id="PF08541">
    <property type="entry name" value="ACP_syn_III_C"/>
    <property type="match status" value="1"/>
</dbReference>
<dbReference type="SUPFAM" id="SSF53901">
    <property type="entry name" value="Thiolase-like"/>
    <property type="match status" value="1"/>
</dbReference>
<proteinExistence type="inferred from homology"/>